<evidence type="ECO:0000255" key="1">
    <source>
        <dbReference type="HAMAP-Rule" id="MF_00056"/>
    </source>
</evidence>
<reference key="1">
    <citation type="journal article" date="2005" name="Nucleic Acids Res.">
        <title>The genome sequence of Salmonella enterica serovar Choleraesuis, a highly invasive and resistant zoonotic pathogen.</title>
        <authorList>
            <person name="Chiu C.-H."/>
            <person name="Tang P."/>
            <person name="Chu C."/>
            <person name="Hu S."/>
            <person name="Bao Q."/>
            <person name="Yu J."/>
            <person name="Chou Y.-Y."/>
            <person name="Wang H.-S."/>
            <person name="Lee Y.-S."/>
        </authorList>
    </citation>
    <scope>NUCLEOTIDE SEQUENCE [LARGE SCALE GENOMIC DNA]</scope>
    <source>
        <strain>SC-B67</strain>
    </source>
</reference>
<sequence length="284" mass="30795">MKQKVVNIGDIKVANDLPFVLFGGMNVLESRDLAMRICEHYVTVTQKLGIPYVFKASFDKANRSSIHSYRGPGLEEGMKIFQELKQTFGVKVITDVHEASQAQPVADVVDVIQLPAFLARQTDLVEAMAKTGAVINVKKPQFVSPGQMGNIVDKFHEGGNDKVILCDRGANFGYDNLVVDMLGFSVMKKVSGNSPVIFDVTHALQCRDPFGAASGGRRGQVTELARAGMAVGLAGLFLESHPDPANAKCDGPSALPLAKLEQFLTQIKAIDDLVKSFDELDTEN</sequence>
<gene>
    <name evidence="1" type="primary">kdsA</name>
    <name type="ordered locus">SCH_1766</name>
</gene>
<dbReference type="EC" id="2.5.1.55" evidence="1"/>
<dbReference type="EMBL" id="AE017220">
    <property type="protein sequence ID" value="AAX65672.1"/>
    <property type="molecule type" value="Genomic_DNA"/>
</dbReference>
<dbReference type="RefSeq" id="WP_000811046.1">
    <property type="nucleotide sequence ID" value="NC_006905.1"/>
</dbReference>
<dbReference type="SMR" id="Q57NN9"/>
<dbReference type="KEGG" id="sec:SCH_1766"/>
<dbReference type="HOGENOM" id="CLU_036666_0_0_6"/>
<dbReference type="UniPathway" id="UPA00030"/>
<dbReference type="UniPathway" id="UPA00357">
    <property type="reaction ID" value="UER00474"/>
</dbReference>
<dbReference type="Proteomes" id="UP000000538">
    <property type="component" value="Chromosome"/>
</dbReference>
<dbReference type="GO" id="GO:0005737">
    <property type="term" value="C:cytoplasm"/>
    <property type="evidence" value="ECO:0007669"/>
    <property type="project" value="UniProtKB-SubCell"/>
</dbReference>
<dbReference type="GO" id="GO:0008676">
    <property type="term" value="F:3-deoxy-8-phosphooctulonate synthase activity"/>
    <property type="evidence" value="ECO:0007669"/>
    <property type="project" value="UniProtKB-UniRule"/>
</dbReference>
<dbReference type="GO" id="GO:0019294">
    <property type="term" value="P:keto-3-deoxy-D-manno-octulosonic acid biosynthetic process"/>
    <property type="evidence" value="ECO:0007669"/>
    <property type="project" value="UniProtKB-UniRule"/>
</dbReference>
<dbReference type="FunFam" id="3.20.20.70:FF:000058">
    <property type="entry name" value="2-dehydro-3-deoxyphosphooctonate aldolase"/>
    <property type="match status" value="1"/>
</dbReference>
<dbReference type="Gene3D" id="3.20.20.70">
    <property type="entry name" value="Aldolase class I"/>
    <property type="match status" value="1"/>
</dbReference>
<dbReference type="HAMAP" id="MF_00056">
    <property type="entry name" value="KDO8P_synth"/>
    <property type="match status" value="1"/>
</dbReference>
<dbReference type="InterPro" id="IPR013785">
    <property type="entry name" value="Aldolase_TIM"/>
</dbReference>
<dbReference type="InterPro" id="IPR006218">
    <property type="entry name" value="DAHP1/KDSA"/>
</dbReference>
<dbReference type="InterPro" id="IPR006269">
    <property type="entry name" value="KDO8P_synthase"/>
</dbReference>
<dbReference type="NCBIfam" id="TIGR01362">
    <property type="entry name" value="KDO8P_synth"/>
    <property type="match status" value="1"/>
</dbReference>
<dbReference type="NCBIfam" id="NF003543">
    <property type="entry name" value="PRK05198.1"/>
    <property type="match status" value="1"/>
</dbReference>
<dbReference type="NCBIfam" id="NF009109">
    <property type="entry name" value="PRK12457.1"/>
    <property type="match status" value="1"/>
</dbReference>
<dbReference type="PANTHER" id="PTHR21057">
    <property type="entry name" value="PHOSPHO-2-DEHYDRO-3-DEOXYHEPTONATE ALDOLASE"/>
    <property type="match status" value="1"/>
</dbReference>
<dbReference type="Pfam" id="PF00793">
    <property type="entry name" value="DAHP_synth_1"/>
    <property type="match status" value="1"/>
</dbReference>
<dbReference type="SUPFAM" id="SSF51569">
    <property type="entry name" value="Aldolase"/>
    <property type="match status" value="1"/>
</dbReference>
<keyword id="KW-0963">Cytoplasm</keyword>
<keyword id="KW-0448">Lipopolysaccharide biosynthesis</keyword>
<keyword id="KW-0808">Transferase</keyword>
<organism>
    <name type="scientific">Salmonella choleraesuis (strain SC-B67)</name>
    <dbReference type="NCBI Taxonomy" id="321314"/>
    <lineage>
        <taxon>Bacteria</taxon>
        <taxon>Pseudomonadati</taxon>
        <taxon>Pseudomonadota</taxon>
        <taxon>Gammaproteobacteria</taxon>
        <taxon>Enterobacterales</taxon>
        <taxon>Enterobacteriaceae</taxon>
        <taxon>Salmonella</taxon>
    </lineage>
</organism>
<accession>Q57NN9</accession>
<feature type="chain" id="PRO_0000304482" description="2-dehydro-3-deoxyphosphooctonate aldolase">
    <location>
        <begin position="1"/>
        <end position="284"/>
    </location>
</feature>
<protein>
    <recommendedName>
        <fullName evidence="1">2-dehydro-3-deoxyphosphooctonate aldolase</fullName>
        <ecNumber evidence="1">2.5.1.55</ecNumber>
    </recommendedName>
    <alternativeName>
        <fullName evidence="1">3-deoxy-D-manno-octulosonic acid 8-phosphate synthase</fullName>
    </alternativeName>
    <alternativeName>
        <fullName evidence="1">KDO-8-phosphate synthase</fullName>
        <shortName evidence="1">KDO 8-P synthase</shortName>
        <shortName evidence="1">KDOPS</shortName>
    </alternativeName>
    <alternativeName>
        <fullName evidence="1">Phospho-2-dehydro-3-deoxyoctonate aldolase</fullName>
    </alternativeName>
</protein>
<proteinExistence type="inferred from homology"/>
<name>KDSA_SALCH</name>
<comment type="catalytic activity">
    <reaction evidence="1">
        <text>D-arabinose 5-phosphate + phosphoenolpyruvate + H2O = 3-deoxy-alpha-D-manno-2-octulosonate-8-phosphate + phosphate</text>
        <dbReference type="Rhea" id="RHEA:14053"/>
        <dbReference type="ChEBI" id="CHEBI:15377"/>
        <dbReference type="ChEBI" id="CHEBI:43474"/>
        <dbReference type="ChEBI" id="CHEBI:57693"/>
        <dbReference type="ChEBI" id="CHEBI:58702"/>
        <dbReference type="ChEBI" id="CHEBI:85985"/>
        <dbReference type="EC" id="2.5.1.55"/>
    </reaction>
</comment>
<comment type="pathway">
    <text evidence="1">Carbohydrate biosynthesis; 3-deoxy-D-manno-octulosonate biosynthesis; 3-deoxy-D-manno-octulosonate from D-ribulose 5-phosphate: step 2/3.</text>
</comment>
<comment type="pathway">
    <text evidence="1">Bacterial outer membrane biogenesis; lipopolysaccharide biosynthesis.</text>
</comment>
<comment type="subcellular location">
    <subcellularLocation>
        <location evidence="1">Cytoplasm</location>
    </subcellularLocation>
</comment>
<comment type="similarity">
    <text evidence="1">Belongs to the KdsA family.</text>
</comment>